<name>NUOH_MAGMM</name>
<accession>A0LDS0</accession>
<feature type="chain" id="PRO_0000298822" description="NADH-quinone oxidoreductase subunit H">
    <location>
        <begin position="1"/>
        <end position="343"/>
    </location>
</feature>
<feature type="transmembrane region" description="Helical" evidence="1">
    <location>
        <begin position="21"/>
        <end position="41"/>
    </location>
</feature>
<feature type="transmembrane region" description="Helical" evidence="1">
    <location>
        <begin position="95"/>
        <end position="115"/>
    </location>
</feature>
<feature type="transmembrane region" description="Helical" evidence="1">
    <location>
        <begin position="124"/>
        <end position="144"/>
    </location>
</feature>
<feature type="transmembrane region" description="Helical" evidence="1">
    <location>
        <begin position="172"/>
        <end position="192"/>
    </location>
</feature>
<feature type="transmembrane region" description="Helical" evidence="1">
    <location>
        <begin position="197"/>
        <end position="217"/>
    </location>
</feature>
<feature type="transmembrane region" description="Helical" evidence="1">
    <location>
        <begin position="257"/>
        <end position="277"/>
    </location>
</feature>
<feature type="transmembrane region" description="Helical" evidence="1">
    <location>
        <begin position="281"/>
        <end position="301"/>
    </location>
</feature>
<feature type="transmembrane region" description="Helical" evidence="1">
    <location>
        <begin position="317"/>
        <end position="337"/>
    </location>
</feature>
<comment type="function">
    <text evidence="1">NDH-1 shuttles electrons from NADH, via FMN and iron-sulfur (Fe-S) centers, to quinones in the respiratory chain. The immediate electron acceptor for the enzyme in this species is believed to be ubiquinone. Couples the redox reaction to proton translocation (for every two electrons transferred, four hydrogen ions are translocated across the cytoplasmic membrane), and thus conserves the redox energy in a proton gradient. This subunit may bind ubiquinone.</text>
</comment>
<comment type="catalytic activity">
    <reaction evidence="1">
        <text>a quinone + NADH + 5 H(+)(in) = a quinol + NAD(+) + 4 H(+)(out)</text>
        <dbReference type="Rhea" id="RHEA:57888"/>
        <dbReference type="ChEBI" id="CHEBI:15378"/>
        <dbReference type="ChEBI" id="CHEBI:24646"/>
        <dbReference type="ChEBI" id="CHEBI:57540"/>
        <dbReference type="ChEBI" id="CHEBI:57945"/>
        <dbReference type="ChEBI" id="CHEBI:132124"/>
    </reaction>
</comment>
<comment type="subunit">
    <text evidence="1">NDH-1 is composed of 14 different subunits. Subunits NuoA, H, J, K, L, M, N constitute the membrane sector of the complex.</text>
</comment>
<comment type="subcellular location">
    <subcellularLocation>
        <location evidence="1">Cell inner membrane</location>
        <topology evidence="1">Multi-pass membrane protein</topology>
    </subcellularLocation>
</comment>
<comment type="similarity">
    <text evidence="1">Belongs to the complex I subunit 1 family.</text>
</comment>
<evidence type="ECO:0000255" key="1">
    <source>
        <dbReference type="HAMAP-Rule" id="MF_01350"/>
    </source>
</evidence>
<organism>
    <name type="scientific">Magnetococcus marinus (strain ATCC BAA-1437 / JCM 17883 / MC-1)</name>
    <dbReference type="NCBI Taxonomy" id="156889"/>
    <lineage>
        <taxon>Bacteria</taxon>
        <taxon>Pseudomonadati</taxon>
        <taxon>Pseudomonadota</taxon>
        <taxon>Alphaproteobacteria</taxon>
        <taxon>Magnetococcales</taxon>
        <taxon>Magnetococcaceae</taxon>
        <taxon>Magnetococcus</taxon>
    </lineage>
</organism>
<reference key="1">
    <citation type="journal article" date="2009" name="Appl. Environ. Microbiol.">
        <title>Complete genome sequence of the chemolithoautotrophic marine magnetotactic coccus strain MC-1.</title>
        <authorList>
            <person name="Schubbe S."/>
            <person name="Williams T.J."/>
            <person name="Xie G."/>
            <person name="Kiss H.E."/>
            <person name="Brettin T.S."/>
            <person name="Martinez D."/>
            <person name="Ross C.A."/>
            <person name="Schuler D."/>
            <person name="Cox B.L."/>
            <person name="Nealson K.H."/>
            <person name="Bazylinski D.A."/>
        </authorList>
    </citation>
    <scope>NUCLEOTIDE SEQUENCE [LARGE SCALE GENOMIC DNA]</scope>
    <source>
        <strain>ATCC BAA-1437 / JCM 17883 / MC-1</strain>
    </source>
</reference>
<proteinExistence type="inferred from homology"/>
<gene>
    <name evidence="1" type="primary">nuoH</name>
    <name type="ordered locus">Mmc1_3628</name>
</gene>
<dbReference type="EC" id="7.1.1.-" evidence="1"/>
<dbReference type="EMBL" id="CP000471">
    <property type="protein sequence ID" value="ABK46113.1"/>
    <property type="molecule type" value="Genomic_DNA"/>
</dbReference>
<dbReference type="RefSeq" id="WP_011715167.1">
    <property type="nucleotide sequence ID" value="NC_008576.1"/>
</dbReference>
<dbReference type="SMR" id="A0LDS0"/>
<dbReference type="STRING" id="156889.Mmc1_3628"/>
<dbReference type="KEGG" id="mgm:Mmc1_3628"/>
<dbReference type="eggNOG" id="COG1005">
    <property type="taxonomic scope" value="Bacteria"/>
</dbReference>
<dbReference type="HOGENOM" id="CLU_015134_0_1_5"/>
<dbReference type="Proteomes" id="UP000002586">
    <property type="component" value="Chromosome"/>
</dbReference>
<dbReference type="GO" id="GO:0005886">
    <property type="term" value="C:plasma membrane"/>
    <property type="evidence" value="ECO:0007669"/>
    <property type="project" value="UniProtKB-SubCell"/>
</dbReference>
<dbReference type="GO" id="GO:0003954">
    <property type="term" value="F:NADH dehydrogenase activity"/>
    <property type="evidence" value="ECO:0007669"/>
    <property type="project" value="TreeGrafter"/>
</dbReference>
<dbReference type="GO" id="GO:0016655">
    <property type="term" value="F:oxidoreductase activity, acting on NAD(P)H, quinone or similar compound as acceptor"/>
    <property type="evidence" value="ECO:0007669"/>
    <property type="project" value="UniProtKB-UniRule"/>
</dbReference>
<dbReference type="GO" id="GO:0048038">
    <property type="term" value="F:quinone binding"/>
    <property type="evidence" value="ECO:0007669"/>
    <property type="project" value="UniProtKB-KW"/>
</dbReference>
<dbReference type="GO" id="GO:0009060">
    <property type="term" value="P:aerobic respiration"/>
    <property type="evidence" value="ECO:0007669"/>
    <property type="project" value="TreeGrafter"/>
</dbReference>
<dbReference type="HAMAP" id="MF_01350">
    <property type="entry name" value="NDH1_NuoH"/>
    <property type="match status" value="1"/>
</dbReference>
<dbReference type="InterPro" id="IPR001694">
    <property type="entry name" value="NADH_UbQ_OxRdtase_su1/FPO"/>
</dbReference>
<dbReference type="InterPro" id="IPR018086">
    <property type="entry name" value="NADH_UbQ_OxRdtase_su1_CS"/>
</dbReference>
<dbReference type="NCBIfam" id="NF004741">
    <property type="entry name" value="PRK06076.1-2"/>
    <property type="match status" value="1"/>
</dbReference>
<dbReference type="PANTHER" id="PTHR11432">
    <property type="entry name" value="NADH DEHYDROGENASE SUBUNIT 1"/>
    <property type="match status" value="1"/>
</dbReference>
<dbReference type="PANTHER" id="PTHR11432:SF3">
    <property type="entry name" value="NADH-UBIQUINONE OXIDOREDUCTASE CHAIN 1"/>
    <property type="match status" value="1"/>
</dbReference>
<dbReference type="Pfam" id="PF00146">
    <property type="entry name" value="NADHdh"/>
    <property type="match status" value="1"/>
</dbReference>
<dbReference type="PROSITE" id="PS00667">
    <property type="entry name" value="COMPLEX1_ND1_1"/>
    <property type="match status" value="1"/>
</dbReference>
<dbReference type="PROSITE" id="PS00668">
    <property type="entry name" value="COMPLEX1_ND1_2"/>
    <property type="match status" value="1"/>
</dbReference>
<keyword id="KW-0997">Cell inner membrane</keyword>
<keyword id="KW-1003">Cell membrane</keyword>
<keyword id="KW-0472">Membrane</keyword>
<keyword id="KW-0520">NAD</keyword>
<keyword id="KW-0874">Quinone</keyword>
<keyword id="KW-1185">Reference proteome</keyword>
<keyword id="KW-1278">Translocase</keyword>
<keyword id="KW-0812">Transmembrane</keyword>
<keyword id="KW-1133">Transmembrane helix</keyword>
<keyword id="KW-0830">Ubiquinone</keyword>
<sequence>MAEFISSIQAMGVAYLGETLWTLVWTILKIAVLIAPILFCVTYLTLAERRLIGFMQVRLGPNRVGVFGILQPLADAVKLFVKETMLPAKAHRTMFILAPILTFSTALVSWAVVPFSPELVLADVNVGVLFILAMSSLGAYGVLLSGWASNTRYSLLGGLRSAAQMISYEVSMGFTLVPVIMLSGSLNLGDIVESQKGLWYALPLLPGFFIYFISVVAETNRAPFDLPEAEAELVSGFCTEYSAMTYGMFFLGEYANIIMVSVLGSLMFLGGWLPPIEALSFIPGIVWLILKTGVLIFFFLWLRATFPRYRYDQLMRLGWKVFLPISLAWIFIVGLAMHLLDMA</sequence>
<protein>
    <recommendedName>
        <fullName evidence="1">NADH-quinone oxidoreductase subunit H</fullName>
        <ecNumber evidence="1">7.1.1.-</ecNumber>
    </recommendedName>
    <alternativeName>
        <fullName evidence="1">NADH dehydrogenase I subunit H</fullName>
    </alternativeName>
    <alternativeName>
        <fullName evidence="1">NDH-1 subunit H</fullName>
    </alternativeName>
</protein>